<proteinExistence type="predicted"/>
<dbReference type="EMBL" id="AJ854042">
    <property type="protein sequence ID" value="CAH69427.1"/>
    <property type="molecule type" value="Genomic_DNA"/>
</dbReference>
<dbReference type="RefSeq" id="YP_001496965.1">
    <property type="nucleotide sequence ID" value="NC_009884.1"/>
</dbReference>
<dbReference type="KEGG" id="vg:5656101"/>
<dbReference type="Proteomes" id="UP000006364">
    <property type="component" value="Genome"/>
</dbReference>
<organismHost>
    <name type="scientific">Acidianus sp. F28</name>
    <dbReference type="NCBI Taxonomy" id="315458"/>
</organismHost>
<name>Y093_AFV2P</name>
<accession>Q573C9</accession>
<sequence>MNPNARDTDKDGDVRPVFTAPKPLSMSILSVINELICSEMQLRFYYHSGDMIPMSDLYRLLTKCTTTPDLMVRKLIEMNVIGVTDNANVVVLK</sequence>
<gene>
    <name type="ORF">ORF93</name>
</gene>
<reference key="1">
    <citation type="journal article" date="2005" name="J. Bacteriol.">
        <title>Structure and genome organization of AFV2, a novel archaeal lipothrixvirus with unusual terminal and core structures.</title>
        <authorList>
            <person name="Haring M."/>
            <person name="Vestergaard G."/>
            <person name="Brugger K."/>
            <person name="Rachel R."/>
            <person name="Garrett R.A."/>
            <person name="Prangishvili D."/>
        </authorList>
    </citation>
    <scope>NUCLEOTIDE SEQUENCE [GENOMIC DNA]</scope>
</reference>
<organism>
    <name type="scientific">Acidianus filamentous virus 2 (isolate Italy/Pozzuoli)</name>
    <name type="common">AFV-2</name>
    <dbReference type="NCBI Taxonomy" id="654910"/>
    <lineage>
        <taxon>Viruses</taxon>
        <taxon>Adnaviria</taxon>
        <taxon>Zilligvirae</taxon>
        <taxon>Taleaviricota</taxon>
        <taxon>Tokiviricetes</taxon>
        <taxon>Ligamenvirales</taxon>
        <taxon>Lipothrixviridae</taxon>
        <taxon>Deltalipothrixvirus</taxon>
        <taxon>Acidianus filamentous virus 2</taxon>
    </lineage>
</organism>
<feature type="chain" id="PRO_0000384496" description="Uncharacterized protein ORF93">
    <location>
        <begin position="1"/>
        <end position="93"/>
    </location>
</feature>
<protein>
    <recommendedName>
        <fullName>Uncharacterized protein ORF93</fullName>
    </recommendedName>
</protein>
<keyword id="KW-1185">Reference proteome</keyword>